<proteinExistence type="inferred from homology"/>
<dbReference type="EC" id="2.4.2.10" evidence="1"/>
<dbReference type="EMBL" id="AE016830">
    <property type="protein sequence ID" value="AAO81488.1"/>
    <property type="molecule type" value="Genomic_DNA"/>
</dbReference>
<dbReference type="RefSeq" id="NP_815418.1">
    <property type="nucleotide sequence ID" value="NC_004668.1"/>
</dbReference>
<dbReference type="RefSeq" id="WP_002357418.1">
    <property type="nucleotide sequence ID" value="NZ_KE136528.1"/>
</dbReference>
<dbReference type="SMR" id="P0DH75"/>
<dbReference type="STRING" id="226185.EF_1712"/>
<dbReference type="EnsemblBacteria" id="AAO81488">
    <property type="protein sequence ID" value="AAO81488"/>
    <property type="gene ID" value="EF_1712"/>
</dbReference>
<dbReference type="GeneID" id="60894008"/>
<dbReference type="KEGG" id="efa:EF1712"/>
<dbReference type="PATRIC" id="fig|226185.45.peg.1800"/>
<dbReference type="eggNOG" id="COG0461">
    <property type="taxonomic scope" value="Bacteria"/>
</dbReference>
<dbReference type="HOGENOM" id="CLU_074878_1_1_9"/>
<dbReference type="UniPathway" id="UPA00070">
    <property type="reaction ID" value="UER00119"/>
</dbReference>
<dbReference type="Proteomes" id="UP000001415">
    <property type="component" value="Chromosome"/>
</dbReference>
<dbReference type="GO" id="GO:0000287">
    <property type="term" value="F:magnesium ion binding"/>
    <property type="evidence" value="ECO:0007669"/>
    <property type="project" value="UniProtKB-UniRule"/>
</dbReference>
<dbReference type="GO" id="GO:0004588">
    <property type="term" value="F:orotate phosphoribosyltransferase activity"/>
    <property type="evidence" value="ECO:0007669"/>
    <property type="project" value="UniProtKB-UniRule"/>
</dbReference>
<dbReference type="GO" id="GO:0044205">
    <property type="term" value="P:'de novo' UMP biosynthetic process"/>
    <property type="evidence" value="ECO:0007669"/>
    <property type="project" value="UniProtKB-UniRule"/>
</dbReference>
<dbReference type="GO" id="GO:0019856">
    <property type="term" value="P:pyrimidine nucleobase biosynthetic process"/>
    <property type="evidence" value="ECO:0007669"/>
    <property type="project" value="TreeGrafter"/>
</dbReference>
<dbReference type="CDD" id="cd06223">
    <property type="entry name" value="PRTases_typeI"/>
    <property type="match status" value="1"/>
</dbReference>
<dbReference type="Gene3D" id="3.40.50.2020">
    <property type="match status" value="1"/>
</dbReference>
<dbReference type="HAMAP" id="MF_01208">
    <property type="entry name" value="PyrE"/>
    <property type="match status" value="1"/>
</dbReference>
<dbReference type="InterPro" id="IPR023031">
    <property type="entry name" value="OPRT"/>
</dbReference>
<dbReference type="InterPro" id="IPR004467">
    <property type="entry name" value="Or_phspho_trans_dom"/>
</dbReference>
<dbReference type="InterPro" id="IPR000836">
    <property type="entry name" value="PRibTrfase_dom"/>
</dbReference>
<dbReference type="InterPro" id="IPR029057">
    <property type="entry name" value="PRTase-like"/>
</dbReference>
<dbReference type="NCBIfam" id="TIGR00336">
    <property type="entry name" value="pyrE"/>
    <property type="match status" value="1"/>
</dbReference>
<dbReference type="PANTHER" id="PTHR19278">
    <property type="entry name" value="OROTATE PHOSPHORIBOSYLTRANSFERASE"/>
    <property type="match status" value="1"/>
</dbReference>
<dbReference type="PANTHER" id="PTHR19278:SF9">
    <property type="entry name" value="URIDINE 5'-MONOPHOSPHATE SYNTHASE"/>
    <property type="match status" value="1"/>
</dbReference>
<dbReference type="Pfam" id="PF00156">
    <property type="entry name" value="Pribosyltran"/>
    <property type="match status" value="1"/>
</dbReference>
<dbReference type="SUPFAM" id="SSF53271">
    <property type="entry name" value="PRTase-like"/>
    <property type="match status" value="1"/>
</dbReference>
<dbReference type="PROSITE" id="PS00103">
    <property type="entry name" value="PUR_PYR_PR_TRANSFER"/>
    <property type="match status" value="1"/>
</dbReference>
<keyword id="KW-0328">Glycosyltransferase</keyword>
<keyword id="KW-0460">Magnesium</keyword>
<keyword id="KW-0665">Pyrimidine biosynthesis</keyword>
<keyword id="KW-1185">Reference proteome</keyword>
<keyword id="KW-0808">Transferase</keyword>
<name>PYRE_ENTFA</name>
<sequence>MTKVAKKIAKDLLDIEAVFLNPNEPFTWASGIKSPIYCDNRITMSYPAVRKEIAEGLAAKIKETFPEVEVIAGTATAGIPHAAWVADILGLPMVYIRSKAKDHGKGNQIEGRISEGQKMVVIEDLISTGGSVLEAAEAAEREGATVLGVAAIFTYELPKGTANFADKQMTLLTLTNYSTLIDAALEANYIEEKDVTLLQEWKKDPENWGK</sequence>
<organism>
    <name type="scientific">Enterococcus faecalis (strain ATCC 700802 / V583)</name>
    <dbReference type="NCBI Taxonomy" id="226185"/>
    <lineage>
        <taxon>Bacteria</taxon>
        <taxon>Bacillati</taxon>
        <taxon>Bacillota</taxon>
        <taxon>Bacilli</taxon>
        <taxon>Lactobacillales</taxon>
        <taxon>Enterococcaceae</taxon>
        <taxon>Enterococcus</taxon>
    </lineage>
</organism>
<feature type="chain" id="PRO_0000110697" description="Orotate phosphoribosyltransferase">
    <location>
        <begin position="1"/>
        <end position="210"/>
    </location>
</feature>
<feature type="binding site" evidence="1">
    <location>
        <position position="97"/>
    </location>
    <ligand>
        <name>5-phospho-alpha-D-ribose 1-diphosphate</name>
        <dbReference type="ChEBI" id="CHEBI:58017"/>
        <note>ligand shared between dimeric partners</note>
    </ligand>
</feature>
<feature type="binding site" evidence="1">
    <location>
        <position position="101"/>
    </location>
    <ligand>
        <name>5-phospho-alpha-D-ribose 1-diphosphate</name>
        <dbReference type="ChEBI" id="CHEBI:58017"/>
        <note>ligand shared between dimeric partners</note>
    </ligand>
</feature>
<feature type="binding site" evidence="1">
    <location>
        <position position="103"/>
    </location>
    <ligand>
        <name>5-phospho-alpha-D-ribose 1-diphosphate</name>
        <dbReference type="ChEBI" id="CHEBI:58017"/>
        <note>ligand shared between dimeric partners</note>
    </ligand>
</feature>
<feature type="binding site" description="in other chain" evidence="1">
    <location>
        <begin position="123"/>
        <end position="131"/>
    </location>
    <ligand>
        <name>5-phospho-alpha-D-ribose 1-diphosphate</name>
        <dbReference type="ChEBI" id="CHEBI:58017"/>
        <note>ligand shared between dimeric partners</note>
    </ligand>
</feature>
<feature type="binding site" evidence="1">
    <location>
        <position position="127"/>
    </location>
    <ligand>
        <name>orotate</name>
        <dbReference type="ChEBI" id="CHEBI:30839"/>
    </ligand>
</feature>
<gene>
    <name evidence="1" type="primary">pyrE</name>
    <name type="ordered locus">EF_1712</name>
</gene>
<protein>
    <recommendedName>
        <fullName evidence="1">Orotate phosphoribosyltransferase</fullName>
        <shortName evidence="1">OPRT</shortName>
        <shortName evidence="1">OPRTase</shortName>
        <ecNumber evidence="1">2.4.2.10</ecNumber>
    </recommendedName>
</protein>
<accession>P0DH75</accession>
<accession>O07657</accession>
<reference key="1">
    <citation type="journal article" date="2003" name="Science">
        <title>Role of mobile DNA in the evolution of vancomycin-resistant Enterococcus faecalis.</title>
        <authorList>
            <person name="Paulsen I.T."/>
            <person name="Banerjei L."/>
            <person name="Myers G.S.A."/>
            <person name="Nelson K.E."/>
            <person name="Seshadri R."/>
            <person name="Read T.D."/>
            <person name="Fouts D.E."/>
            <person name="Eisen J.A."/>
            <person name="Gill S.R."/>
            <person name="Heidelberg J.F."/>
            <person name="Tettelin H."/>
            <person name="Dodson R.J."/>
            <person name="Umayam L.A."/>
            <person name="Brinkac L.M."/>
            <person name="Beanan M.J."/>
            <person name="Daugherty S.C."/>
            <person name="DeBoy R.T."/>
            <person name="Durkin S.A."/>
            <person name="Kolonay J.F."/>
            <person name="Madupu R."/>
            <person name="Nelson W.C."/>
            <person name="Vamathevan J.J."/>
            <person name="Tran B."/>
            <person name="Upton J."/>
            <person name="Hansen T."/>
            <person name="Shetty J."/>
            <person name="Khouri H.M."/>
            <person name="Utterback T.R."/>
            <person name="Radune D."/>
            <person name="Ketchum K.A."/>
            <person name="Dougherty B.A."/>
            <person name="Fraser C.M."/>
        </authorList>
    </citation>
    <scope>NUCLEOTIDE SEQUENCE [LARGE SCALE GENOMIC DNA]</scope>
    <source>
        <strain>ATCC 700802 / V583</strain>
    </source>
</reference>
<comment type="function">
    <text evidence="1">Catalyzes the transfer of a ribosyl phosphate group from 5-phosphoribose 1-diphosphate to orotate, leading to the formation of orotidine monophosphate (OMP).</text>
</comment>
<comment type="catalytic activity">
    <reaction evidence="1">
        <text>orotidine 5'-phosphate + diphosphate = orotate + 5-phospho-alpha-D-ribose 1-diphosphate</text>
        <dbReference type="Rhea" id="RHEA:10380"/>
        <dbReference type="ChEBI" id="CHEBI:30839"/>
        <dbReference type="ChEBI" id="CHEBI:33019"/>
        <dbReference type="ChEBI" id="CHEBI:57538"/>
        <dbReference type="ChEBI" id="CHEBI:58017"/>
        <dbReference type="EC" id="2.4.2.10"/>
    </reaction>
</comment>
<comment type="cofactor">
    <cofactor evidence="1">
        <name>Mg(2+)</name>
        <dbReference type="ChEBI" id="CHEBI:18420"/>
    </cofactor>
</comment>
<comment type="pathway">
    <text evidence="1">Pyrimidine metabolism; UMP biosynthesis via de novo pathway; UMP from orotate: step 1/2.</text>
</comment>
<comment type="subunit">
    <text evidence="1">Homodimer.</text>
</comment>
<comment type="similarity">
    <text evidence="1">Belongs to the purine/pyrimidine phosphoribosyltransferase family. PyrE subfamily.</text>
</comment>
<evidence type="ECO:0000255" key="1">
    <source>
        <dbReference type="HAMAP-Rule" id="MF_01208"/>
    </source>
</evidence>